<organism>
    <name type="scientific">Alcaligenes faecalis</name>
    <dbReference type="NCBI Taxonomy" id="511"/>
    <lineage>
        <taxon>Bacteria</taxon>
        <taxon>Pseudomonadati</taxon>
        <taxon>Pseudomonadota</taxon>
        <taxon>Betaproteobacteria</taxon>
        <taxon>Burkholderiales</taxon>
        <taxon>Alcaligenaceae</taxon>
        <taxon>Alcaligenes</taxon>
    </lineage>
</organism>
<proteinExistence type="evidence at protein level"/>
<comment type="catalytic activity">
    <reaction>
        <text>nitric oxide + Fe(III)-[cytochrome c] + H2O = Fe(II)-[cytochrome c] + nitrite + 2 H(+)</text>
        <dbReference type="Rhea" id="RHEA:15233"/>
        <dbReference type="Rhea" id="RHEA-COMP:10350"/>
        <dbReference type="Rhea" id="RHEA-COMP:14399"/>
        <dbReference type="ChEBI" id="CHEBI:15377"/>
        <dbReference type="ChEBI" id="CHEBI:15378"/>
        <dbReference type="ChEBI" id="CHEBI:16301"/>
        <dbReference type="ChEBI" id="CHEBI:16480"/>
        <dbReference type="ChEBI" id="CHEBI:29033"/>
        <dbReference type="ChEBI" id="CHEBI:29034"/>
        <dbReference type="EC" id="1.7.2.1"/>
    </reaction>
</comment>
<comment type="cofactor">
    <cofactor evidence="1">
        <name>Cu(2+)</name>
        <dbReference type="ChEBI" id="CHEBI:29036"/>
    </cofactor>
    <text evidence="1">Binds 1 Cu(2+) ion. The Cu(2+) ion is held by residues from each of 2 monomers of the trimer. Nitrite is bound to the Cu(2+) ion site. Pseudoazurin is the physiological electron donor for the Cu-NIR in vitro.</text>
</comment>
<comment type="cofactor">
    <cofactor evidence="1">
        <name>Cu(+)</name>
        <dbReference type="ChEBI" id="CHEBI:49552"/>
    </cofactor>
    <text evidence="1">Binds 1 Cu(+) ion. The Cu(+) ion is bound within a single monomer.</text>
</comment>
<comment type="cofactor">
    <cofactor evidence="1">
        <name>FAD</name>
        <dbReference type="ChEBI" id="CHEBI:57692"/>
    </cofactor>
</comment>
<comment type="pathway">
    <text>Nitrogen metabolism; nitrate reduction (denitrification); dinitrogen from nitrate: step 2/4.</text>
</comment>
<comment type="subunit">
    <text>Homotrimer.</text>
</comment>
<comment type="subcellular location">
    <subcellularLocation>
        <location>Periplasm</location>
    </subcellularLocation>
</comment>
<comment type="induction">
    <text>Under anaerobic growth conditions and by nitrite.</text>
</comment>
<comment type="domain">
    <text>The type I copper site in NIR plays a crucial role for electron transfer from pseudoazurin to the type II copper site of NIR, which comprises the catalytic center of NIR for the reduction of nitrite.</text>
</comment>
<comment type="PTM">
    <text>Predicted to be exported by the Tat system. The position of the signal peptide cleavage has been experimentally proven.</text>
</comment>
<comment type="similarity">
    <text evidence="5">Belongs to the multicopper oxidase family.</text>
</comment>
<accession>P38501</accession>
<dbReference type="EC" id="1.7.2.1"/>
<dbReference type="EMBL" id="D13155">
    <property type="protein sequence ID" value="BAA02440.1"/>
    <property type="molecule type" value="Genomic_DNA"/>
</dbReference>
<dbReference type="PIR" id="I39582">
    <property type="entry name" value="I39582"/>
</dbReference>
<dbReference type="PDB" id="1AQ8">
    <property type="method" value="X-ray"/>
    <property type="resolution" value="2.00 A"/>
    <property type="chains" value="A/B/C=34-376"/>
</dbReference>
<dbReference type="PDB" id="1AS6">
    <property type="method" value="X-ray"/>
    <property type="resolution" value="1.80 A"/>
    <property type="chains" value="A/B/C=34-376"/>
</dbReference>
<dbReference type="PDB" id="1AS7">
    <property type="method" value="X-ray"/>
    <property type="resolution" value="2.00 A"/>
    <property type="chains" value="A/B/C=34-376"/>
</dbReference>
<dbReference type="PDB" id="1AS8">
    <property type="method" value="X-ray"/>
    <property type="resolution" value="1.85 A"/>
    <property type="chains" value="A/B/C=34-376"/>
</dbReference>
<dbReference type="PDB" id="1ET5">
    <property type="method" value="X-ray"/>
    <property type="resolution" value="1.90 A"/>
    <property type="chains" value="A=40-376"/>
</dbReference>
<dbReference type="PDB" id="1ET7">
    <property type="method" value="X-ray"/>
    <property type="resolution" value="1.70 A"/>
    <property type="chains" value="A=40-376"/>
</dbReference>
<dbReference type="PDB" id="1ET8">
    <property type="method" value="X-ray"/>
    <property type="resolution" value="1.80 A"/>
    <property type="chains" value="A=40-376"/>
</dbReference>
<dbReference type="PDB" id="1J9Q">
    <property type="method" value="X-ray"/>
    <property type="resolution" value="1.65 A"/>
    <property type="chains" value="A/B/C=40-376"/>
</dbReference>
<dbReference type="PDB" id="1J9R">
    <property type="method" value="X-ray"/>
    <property type="resolution" value="2.00 A"/>
    <property type="chains" value="A/B/C=40-376"/>
</dbReference>
<dbReference type="PDB" id="1J9S">
    <property type="method" value="X-ray"/>
    <property type="resolution" value="1.90 A"/>
    <property type="chains" value="A/B/C=40-376"/>
</dbReference>
<dbReference type="PDB" id="1J9T">
    <property type="method" value="X-ray"/>
    <property type="resolution" value="1.95 A"/>
    <property type="chains" value="A/B/C=40-376"/>
</dbReference>
<dbReference type="PDB" id="1L9O">
    <property type="method" value="X-ray"/>
    <property type="resolution" value="1.70 A"/>
    <property type="chains" value="A/B/C=40-376"/>
</dbReference>
<dbReference type="PDB" id="1L9P">
    <property type="method" value="X-ray"/>
    <property type="resolution" value="1.75 A"/>
    <property type="chains" value="A/B/C=40-376"/>
</dbReference>
<dbReference type="PDB" id="1L9Q">
    <property type="method" value="X-ray"/>
    <property type="resolution" value="1.70 A"/>
    <property type="chains" value="A/B/C=40-376"/>
</dbReference>
<dbReference type="PDB" id="1L9R">
    <property type="method" value="X-ray"/>
    <property type="resolution" value="1.78 A"/>
    <property type="chains" value="A/B/C=40-376"/>
</dbReference>
<dbReference type="PDB" id="1L9S">
    <property type="method" value="X-ray"/>
    <property type="resolution" value="1.78 A"/>
    <property type="chains" value="A/B/C=40-376"/>
</dbReference>
<dbReference type="PDB" id="1L9T">
    <property type="method" value="X-ray"/>
    <property type="resolution" value="1.75 A"/>
    <property type="chains" value="A/B/C=40-376"/>
</dbReference>
<dbReference type="PDB" id="1NPJ">
    <property type="method" value="X-ray"/>
    <property type="resolution" value="1.90 A"/>
    <property type="chains" value="A/B/C=34-376"/>
</dbReference>
<dbReference type="PDB" id="1NPN">
    <property type="method" value="X-ray"/>
    <property type="resolution" value="1.80 A"/>
    <property type="chains" value="A/B/C=34-376"/>
</dbReference>
<dbReference type="PDB" id="1NTD">
    <property type="method" value="X-ray"/>
    <property type="resolution" value="2.30 A"/>
    <property type="chains" value="A=34-376"/>
</dbReference>
<dbReference type="PDB" id="1SJM">
    <property type="method" value="X-ray"/>
    <property type="resolution" value="1.40 A"/>
    <property type="chains" value="A/B/C=40-376"/>
</dbReference>
<dbReference type="PDB" id="1SNR">
    <property type="method" value="X-ray"/>
    <property type="resolution" value="1.31 A"/>
    <property type="chains" value="A/B/C=40-376"/>
</dbReference>
<dbReference type="PDB" id="1ZDQ">
    <property type="method" value="X-ray"/>
    <property type="resolution" value="1.80 A"/>
    <property type="chains" value="A/B/C=40-375"/>
</dbReference>
<dbReference type="PDB" id="1ZDS">
    <property type="method" value="X-ray"/>
    <property type="resolution" value="1.55 A"/>
    <property type="chains" value="A/B/C=40-375"/>
</dbReference>
<dbReference type="PDB" id="2AFN">
    <property type="method" value="X-ray"/>
    <property type="resolution" value="2.00 A"/>
    <property type="chains" value="A/B/C=34-376"/>
</dbReference>
<dbReference type="PDB" id="2B08">
    <property type="method" value="X-ray"/>
    <property type="resolution" value="1.90 A"/>
    <property type="chains" value="A/B/C=37-376"/>
</dbReference>
<dbReference type="PDB" id="2E86">
    <property type="method" value="X-ray"/>
    <property type="resolution" value="1.50 A"/>
    <property type="chains" value="A/B/C=40-376"/>
</dbReference>
<dbReference type="PDB" id="2FJS">
    <property type="method" value="X-ray"/>
    <property type="resolution" value="1.85 A"/>
    <property type="chains" value="A/B/C=40-376"/>
</dbReference>
<dbReference type="PDB" id="2P80">
    <property type="method" value="NMR"/>
    <property type="chains" value="A/B/C=40-376"/>
</dbReference>
<dbReference type="PDB" id="2PP7">
    <property type="method" value="X-ray"/>
    <property type="resolution" value="1.65 A"/>
    <property type="chains" value="A/B/C=40-376"/>
</dbReference>
<dbReference type="PDB" id="2PP8">
    <property type="method" value="X-ray"/>
    <property type="resolution" value="1.50 A"/>
    <property type="chains" value="A/B/C=40-376"/>
</dbReference>
<dbReference type="PDB" id="2PP9">
    <property type="method" value="X-ray"/>
    <property type="resolution" value="1.80 A"/>
    <property type="chains" value="A/B/C=40-376"/>
</dbReference>
<dbReference type="PDB" id="2PPA">
    <property type="method" value="X-ray"/>
    <property type="resolution" value="1.69 A"/>
    <property type="chains" value="A/B/C=40-376"/>
</dbReference>
<dbReference type="PDB" id="2PPC">
    <property type="method" value="X-ray"/>
    <property type="resolution" value="1.58 A"/>
    <property type="chains" value="A/B/C=40-376"/>
</dbReference>
<dbReference type="PDB" id="2PPD">
    <property type="method" value="X-ray"/>
    <property type="resolution" value="1.80 A"/>
    <property type="chains" value="A/B/C=34-376"/>
</dbReference>
<dbReference type="PDB" id="2PPE">
    <property type="method" value="X-ray"/>
    <property type="resolution" value="1.75 A"/>
    <property type="chains" value="A/B/C=34-376"/>
</dbReference>
<dbReference type="PDB" id="2PPF">
    <property type="method" value="X-ray"/>
    <property type="resolution" value="1.65 A"/>
    <property type="chains" value="A/B/C=40-376"/>
</dbReference>
<dbReference type="PDB" id="3H4F">
    <property type="method" value="X-ray"/>
    <property type="resolution" value="2.10 A"/>
    <property type="chains" value="A/B/C=40-375"/>
</dbReference>
<dbReference type="PDB" id="3H4H">
    <property type="method" value="X-ray"/>
    <property type="resolution" value="1.60 A"/>
    <property type="chains" value="A/B/C=41-375"/>
</dbReference>
<dbReference type="PDB" id="3H56">
    <property type="method" value="X-ray"/>
    <property type="resolution" value="1.50 A"/>
    <property type="chains" value="A=40-375"/>
</dbReference>
<dbReference type="PDB" id="4YSC">
    <property type="method" value="X-ray"/>
    <property type="resolution" value="2.03 A"/>
    <property type="chains" value="A/B/C=40-376"/>
</dbReference>
<dbReference type="PDB" id="4YSE">
    <property type="method" value="X-ray"/>
    <property type="resolution" value="1.20 A"/>
    <property type="chains" value="A/B/C=40-376"/>
</dbReference>
<dbReference type="PDB" id="5D4H">
    <property type="method" value="X-ray"/>
    <property type="resolution" value="1.30 A"/>
    <property type="chains" value="A/B/C=40-376"/>
</dbReference>
<dbReference type="PDB" id="5D4I">
    <property type="method" value="X-ray"/>
    <property type="resolution" value="1.60 A"/>
    <property type="chains" value="A/B/C=40-376"/>
</dbReference>
<dbReference type="PDB" id="5D4J">
    <property type="method" value="X-ray"/>
    <property type="resolution" value="2.00 A"/>
    <property type="chains" value="A/B/C=40-376"/>
</dbReference>
<dbReference type="PDB" id="5F7A">
    <property type="method" value="X-ray"/>
    <property type="resolution" value="1.54 A"/>
    <property type="chains" value="A/B/C=40-376"/>
</dbReference>
<dbReference type="PDB" id="5F7B">
    <property type="method" value="X-ray"/>
    <property type="resolution" value="1.56 A"/>
    <property type="chains" value="A/B/C=40-376"/>
</dbReference>
<dbReference type="PDBsum" id="1AQ8"/>
<dbReference type="PDBsum" id="1AS6"/>
<dbReference type="PDBsum" id="1AS7"/>
<dbReference type="PDBsum" id="1AS8"/>
<dbReference type="PDBsum" id="1ET5"/>
<dbReference type="PDBsum" id="1ET7"/>
<dbReference type="PDBsum" id="1ET8"/>
<dbReference type="PDBsum" id="1J9Q"/>
<dbReference type="PDBsum" id="1J9R"/>
<dbReference type="PDBsum" id="1J9S"/>
<dbReference type="PDBsum" id="1J9T"/>
<dbReference type="PDBsum" id="1L9O"/>
<dbReference type="PDBsum" id="1L9P"/>
<dbReference type="PDBsum" id="1L9Q"/>
<dbReference type="PDBsum" id="1L9R"/>
<dbReference type="PDBsum" id="1L9S"/>
<dbReference type="PDBsum" id="1L9T"/>
<dbReference type="PDBsum" id="1NPJ"/>
<dbReference type="PDBsum" id="1NPN"/>
<dbReference type="PDBsum" id="1NTD"/>
<dbReference type="PDBsum" id="1SJM"/>
<dbReference type="PDBsum" id="1SNR"/>
<dbReference type="PDBsum" id="1ZDQ"/>
<dbReference type="PDBsum" id="1ZDS"/>
<dbReference type="PDBsum" id="2AFN"/>
<dbReference type="PDBsum" id="2B08"/>
<dbReference type="PDBsum" id="2E86"/>
<dbReference type="PDBsum" id="2FJS"/>
<dbReference type="PDBsum" id="2P80"/>
<dbReference type="PDBsum" id="2PP7"/>
<dbReference type="PDBsum" id="2PP8"/>
<dbReference type="PDBsum" id="2PP9"/>
<dbReference type="PDBsum" id="2PPA"/>
<dbReference type="PDBsum" id="2PPC"/>
<dbReference type="PDBsum" id="2PPD"/>
<dbReference type="PDBsum" id="2PPE"/>
<dbReference type="PDBsum" id="2PPF"/>
<dbReference type="PDBsum" id="3H4F"/>
<dbReference type="PDBsum" id="3H4H"/>
<dbReference type="PDBsum" id="3H56"/>
<dbReference type="PDBsum" id="4YSC"/>
<dbReference type="PDBsum" id="4YSE"/>
<dbReference type="PDBsum" id="5D4H"/>
<dbReference type="PDBsum" id="5D4I"/>
<dbReference type="PDBsum" id="5D4J"/>
<dbReference type="PDBsum" id="5F7A"/>
<dbReference type="PDBsum" id="5F7B"/>
<dbReference type="BMRB" id="P38501"/>
<dbReference type="SMR" id="P38501"/>
<dbReference type="BRENDA" id="1.7.2.1">
    <property type="organism ID" value="232"/>
</dbReference>
<dbReference type="SABIO-RK" id="P38501"/>
<dbReference type="UniPathway" id="UPA00652">
    <property type="reaction ID" value="UER00707"/>
</dbReference>
<dbReference type="EvolutionaryTrace" id="P38501"/>
<dbReference type="GO" id="GO:0042597">
    <property type="term" value="C:periplasmic space"/>
    <property type="evidence" value="ECO:0007669"/>
    <property type="project" value="UniProtKB-SubCell"/>
</dbReference>
<dbReference type="GO" id="GO:0005507">
    <property type="term" value="F:copper ion binding"/>
    <property type="evidence" value="ECO:0007669"/>
    <property type="project" value="InterPro"/>
</dbReference>
<dbReference type="GO" id="GO:0050421">
    <property type="term" value="F:nitrite reductase (NO-forming) activity"/>
    <property type="evidence" value="ECO:0007669"/>
    <property type="project" value="UniProtKB-EC"/>
</dbReference>
<dbReference type="GO" id="GO:0019333">
    <property type="term" value="P:denitrification pathway"/>
    <property type="evidence" value="ECO:0007669"/>
    <property type="project" value="UniProtKB-UniPathway"/>
</dbReference>
<dbReference type="GO" id="GO:0042128">
    <property type="term" value="P:nitrate assimilation"/>
    <property type="evidence" value="ECO:0007669"/>
    <property type="project" value="UniProtKB-KW"/>
</dbReference>
<dbReference type="CDD" id="cd11020">
    <property type="entry name" value="CuRO_1_CuNIR"/>
    <property type="match status" value="1"/>
</dbReference>
<dbReference type="Gene3D" id="2.60.40.420">
    <property type="entry name" value="Cupredoxins - blue copper proteins"/>
    <property type="match status" value="2"/>
</dbReference>
<dbReference type="InterPro" id="IPR011707">
    <property type="entry name" value="Cu-oxidase-like_N"/>
</dbReference>
<dbReference type="InterPro" id="IPR001117">
    <property type="entry name" value="Cu-oxidase_2nd"/>
</dbReference>
<dbReference type="InterPro" id="IPR008972">
    <property type="entry name" value="Cupredoxin"/>
</dbReference>
<dbReference type="InterPro" id="IPR001287">
    <property type="entry name" value="NO2-reductase_Cu"/>
</dbReference>
<dbReference type="InterPro" id="IPR006311">
    <property type="entry name" value="TAT_signal"/>
</dbReference>
<dbReference type="NCBIfam" id="TIGR02376">
    <property type="entry name" value="Cu_nitrite_red"/>
    <property type="match status" value="1"/>
</dbReference>
<dbReference type="Pfam" id="PF00394">
    <property type="entry name" value="Cu-oxidase"/>
    <property type="match status" value="1"/>
</dbReference>
<dbReference type="Pfam" id="PF07732">
    <property type="entry name" value="Cu-oxidase_3"/>
    <property type="match status" value="1"/>
</dbReference>
<dbReference type="PRINTS" id="PR00695">
    <property type="entry name" value="CUNO2RDTASE"/>
</dbReference>
<dbReference type="SUPFAM" id="SSF49503">
    <property type="entry name" value="Cupredoxins"/>
    <property type="match status" value="2"/>
</dbReference>
<dbReference type="PROSITE" id="PS51318">
    <property type="entry name" value="TAT"/>
    <property type="match status" value="1"/>
</dbReference>
<evidence type="ECO:0000250" key="1"/>
<evidence type="ECO:0000255" key="2">
    <source>
        <dbReference type="PROSITE-ProRule" id="PRU00648"/>
    </source>
</evidence>
<evidence type="ECO:0000269" key="3">
    <source>
    </source>
</evidence>
<evidence type="ECO:0000269" key="4">
    <source>
    </source>
</evidence>
<evidence type="ECO:0000305" key="5"/>
<evidence type="ECO:0007829" key="6">
    <source>
        <dbReference type="PDB" id="2P80"/>
    </source>
</evidence>
<evidence type="ECO:0007829" key="7">
    <source>
        <dbReference type="PDB" id="4YSE"/>
    </source>
</evidence>
<evidence type="ECO:0007829" key="8">
    <source>
        <dbReference type="PDB" id="5D4H"/>
    </source>
</evidence>
<protein>
    <recommendedName>
        <fullName>Copper-containing nitrite reductase</fullName>
        <ecNumber>1.7.2.1</ecNumber>
    </recommendedName>
    <alternativeName>
        <fullName>Cu-NIR</fullName>
    </alternativeName>
</protein>
<gene>
    <name type="primary">nirK</name>
    <name type="synonym">nir</name>
</gene>
<feature type="signal peptide" description="Tat-type signal" evidence="2 4">
    <location>
        <begin position="1"/>
        <end position="33"/>
    </location>
</feature>
<feature type="chain" id="PRO_0000002987" description="Copper-containing nitrite reductase">
    <location>
        <begin position="34"/>
        <end position="376"/>
    </location>
</feature>
<feature type="domain" description="Plastocyanin-like 1">
    <location>
        <begin position="34"/>
        <end position="211"/>
    </location>
</feature>
<feature type="domain" description="Plastocyanin-like 2">
    <location>
        <begin position="212"/>
        <end position="376"/>
    </location>
</feature>
<feature type="binding site" description="type 1 copper site" evidence="3">
    <location>
        <position position="131"/>
    </location>
    <ligand>
        <name>Cu cation</name>
        <dbReference type="ChEBI" id="CHEBI:23378"/>
        <label>1</label>
    </ligand>
</feature>
<feature type="binding site" description="type 2 copper site">
    <location>
        <position position="136"/>
    </location>
    <ligand>
        <name>Cu cation</name>
        <dbReference type="ChEBI" id="CHEBI:23378"/>
        <label>2</label>
    </ligand>
</feature>
<feature type="binding site" description="type 2 copper site">
    <location>
        <position position="171"/>
    </location>
    <ligand>
        <name>Cu cation</name>
        <dbReference type="ChEBI" id="CHEBI:23378"/>
        <label>2</label>
    </ligand>
</feature>
<feature type="binding site" description="type 1 copper site">
    <location>
        <position position="172"/>
    </location>
    <ligand>
        <name>Cu cation</name>
        <dbReference type="ChEBI" id="CHEBI:23378"/>
        <label>1</label>
    </ligand>
</feature>
<feature type="binding site" description="type 1 copper site">
    <location>
        <position position="181"/>
    </location>
    <ligand>
        <name>Cu cation</name>
        <dbReference type="ChEBI" id="CHEBI:23378"/>
        <label>1</label>
    </ligand>
</feature>
<feature type="binding site" description="type 1 copper site">
    <location>
        <position position="186"/>
    </location>
    <ligand>
        <name>Cu cation</name>
        <dbReference type="ChEBI" id="CHEBI:23378"/>
        <label>1</label>
    </ligand>
</feature>
<feature type="binding site" description="type 2 copper site" evidence="3">
    <location>
        <position position="342"/>
    </location>
    <ligand>
        <name>Cu cation</name>
        <dbReference type="ChEBI" id="CHEBI:23378"/>
        <label>2</label>
    </ligand>
</feature>
<feature type="modified residue" description="Pyrrolidone carboxylic acid" evidence="4">
    <location>
        <position position="34"/>
    </location>
</feature>
<feature type="mutagenesis site" description="Loses nitrite-reducing activity." evidence="3">
    <original>H</original>
    <variation>K</variation>
    <location>
        <position position="171"/>
    </location>
</feature>
<feature type="mutagenesis site" description="Contains only a type II copper atom and fails to catalyze the reduction of nitrite." evidence="3">
    <original>M</original>
    <variation>E</variation>
    <location>
        <position position="186"/>
    </location>
</feature>
<feature type="helix" evidence="7">
    <location>
        <begin position="42"/>
        <end position="46"/>
    </location>
</feature>
<feature type="strand" evidence="7">
    <location>
        <begin position="50"/>
        <end position="52"/>
    </location>
</feature>
<feature type="strand" evidence="8">
    <location>
        <begin position="69"/>
        <end position="71"/>
    </location>
</feature>
<feature type="strand" evidence="7">
    <location>
        <begin position="74"/>
        <end position="87"/>
    </location>
</feature>
<feature type="strand" evidence="7">
    <location>
        <begin position="94"/>
        <end position="100"/>
    </location>
</feature>
<feature type="strand" evidence="7">
    <location>
        <begin position="103"/>
        <end position="105"/>
    </location>
</feature>
<feature type="strand" evidence="7">
    <location>
        <begin position="109"/>
        <end position="112"/>
    </location>
</feature>
<feature type="strand" evidence="7">
    <location>
        <begin position="116"/>
        <end position="123"/>
    </location>
</feature>
<feature type="helix" evidence="7">
    <location>
        <begin position="141"/>
        <end position="147"/>
    </location>
</feature>
<feature type="strand" evidence="7">
    <location>
        <begin position="154"/>
        <end position="161"/>
    </location>
</feature>
<feature type="strand" evidence="7">
    <location>
        <begin position="166"/>
        <end position="171"/>
    </location>
</feature>
<feature type="helix" evidence="7">
    <location>
        <begin position="178"/>
        <end position="183"/>
    </location>
</feature>
<feature type="strand" evidence="7">
    <location>
        <begin position="187"/>
        <end position="193"/>
    </location>
</feature>
<feature type="strand" evidence="7">
    <location>
        <begin position="209"/>
        <end position="219"/>
    </location>
</feature>
<feature type="helix" evidence="7">
    <location>
        <begin position="235"/>
        <end position="238"/>
    </location>
</feature>
<feature type="helix" evidence="7">
    <location>
        <begin position="239"/>
        <end position="246"/>
    </location>
</feature>
<feature type="turn" evidence="7">
    <location>
        <begin position="247"/>
        <end position="249"/>
    </location>
</feature>
<feature type="strand" evidence="7">
    <location>
        <begin position="252"/>
        <end position="256"/>
    </location>
</feature>
<feature type="turn" evidence="7">
    <location>
        <begin position="260"/>
        <end position="263"/>
    </location>
</feature>
<feature type="helix" evidence="7">
    <location>
        <begin position="265"/>
        <end position="267"/>
    </location>
</feature>
<feature type="strand" evidence="7">
    <location>
        <begin position="269"/>
        <end position="272"/>
    </location>
</feature>
<feature type="strand" evidence="7">
    <location>
        <begin position="276"/>
        <end position="286"/>
    </location>
</feature>
<feature type="strand" evidence="7">
    <location>
        <begin position="290"/>
        <end position="293"/>
    </location>
</feature>
<feature type="strand" evidence="7">
    <location>
        <begin position="297"/>
        <end position="301"/>
    </location>
</feature>
<feature type="strand" evidence="6">
    <location>
        <begin position="306"/>
        <end position="308"/>
    </location>
</feature>
<feature type="strand" evidence="7">
    <location>
        <begin position="311"/>
        <end position="316"/>
    </location>
</feature>
<feature type="strand" evidence="7">
    <location>
        <begin position="323"/>
        <end position="330"/>
    </location>
</feature>
<feature type="strand" evidence="7">
    <location>
        <begin position="335"/>
        <end position="343"/>
    </location>
</feature>
<feature type="helix" evidence="7">
    <location>
        <begin position="344"/>
        <end position="348"/>
    </location>
</feature>
<feature type="strand" evidence="7">
    <location>
        <begin position="353"/>
        <end position="360"/>
    </location>
</feature>
<feature type="turn" evidence="7">
    <location>
        <begin position="364"/>
        <end position="366"/>
    </location>
</feature>
<feature type="strand" evidence="7">
    <location>
        <begin position="367"/>
        <end position="375"/>
    </location>
</feature>
<keyword id="KW-0002">3D-structure</keyword>
<keyword id="KW-0186">Copper</keyword>
<keyword id="KW-0903">Direct protein sequencing</keyword>
<keyword id="KW-0274">FAD</keyword>
<keyword id="KW-0285">Flavoprotein</keyword>
<keyword id="KW-0479">Metal-binding</keyword>
<keyword id="KW-0534">Nitrate assimilation</keyword>
<keyword id="KW-0560">Oxidoreductase</keyword>
<keyword id="KW-0574">Periplasm</keyword>
<keyword id="KW-0873">Pyrrolidone carboxylic acid</keyword>
<keyword id="KW-0677">Repeat</keyword>
<keyword id="KW-0732">Signal</keyword>
<sequence>MAEQMQISRRTILAGAALAGALAPVLATTSAWGQGAVRKATAAEIAALPRQKVELVDPPFVHAHSQVAEGGPKVVEFTMVIEEKKIVIDDAGTEVHAMAFNGTVPGPLMVVHQDDYLELTLINPETNTLMHNIDFHAATGALGGGGLTEINPGEKTILRFKATKPGVFVYHCAPPGMVPWHVVSGMNGAIMVLPREGLHDGKGKALTYDKIYYVGEQDFYVPRDENGKYKKYEAPGDAYEDTVKVMRTLTPTHVVFNGAVGALTGDKAMTAAVGEKVLIVHSQANRDTRPHLIGGHGDYVWATGKFNTPPDVDQETWFIPGGAAGAAFYTFQQPGIYAYVNHNLIEAFELGAAAHFKVTGEWNDDLMTSVLAPSGT</sequence>
<name>NIR_ALCFA</name>
<reference key="1">
    <citation type="journal article" date="1993" name="J. Gen. Microbiol.">
        <title>Cloning and characterization of a nitrite reductase gene from Alcaligenes faecalis and its expression in Escherichia coli.</title>
        <authorList>
            <person name="Nishiyama M."/>
            <person name="Suzuki J."/>
            <person name="Kukimoto M."/>
            <person name="Ohnuki T."/>
            <person name="Horinouchi S."/>
            <person name="Beppu T."/>
        </authorList>
    </citation>
    <scope>NUCLEOTIDE SEQUENCE [GENOMIC DNA]</scope>
    <scope>PROTEIN SEQUENCE OF 34-48 AND 192-240</scope>
    <scope>PYROGLUTAMATE FORMATION AT GLN-34</scope>
    <source>
        <strain>S-6</strain>
    </source>
</reference>
<reference key="2">
    <citation type="journal article" date="1994" name="Biochemistry">
        <title>X-ray structure and site-directed mutagenesis of a nitrite reductase from Alcaligenes faecalis S-6: roles of two copper atoms in nitrite reduction.</title>
        <authorList>
            <person name="Kukimoto M."/>
            <person name="Nishiyama M."/>
            <person name="Murphy M.E.P."/>
            <person name="Turley S."/>
            <person name="Adman E.T."/>
            <person name="Horinouchi S."/>
            <person name="Beppu T."/>
        </authorList>
    </citation>
    <scope>X-RAY CRYSTALLOGRAPHY (2.6 ANGSTROMS)</scope>
    <scope>MUTAGENESIS</scope>
    <source>
        <strain>S-6</strain>
    </source>
</reference>
<reference key="3">
    <citation type="journal article" date="1995" name="Biochemistry">
        <title>Structure of Alcaligenes faecalis nitrite reductase and a copper site mutant, M150E, that contains zinc.</title>
        <authorList>
            <person name="Murphy M.E."/>
            <person name="Turley S."/>
            <person name="Kukimoto M."/>
            <person name="Nishiyama M."/>
            <person name="Horinouchi S."/>
            <person name="Sasaki H."/>
            <person name="Tanokura M."/>
            <person name="Adman E.T."/>
        </authorList>
    </citation>
    <scope>X-RAY CRYSTALLOGRAPHY (2.0 ANGSTROMS)</scope>
</reference>
<reference key="4">
    <citation type="journal article" date="1997" name="J. Biol. Chem.">
        <title>Structure of nitrite bound to copper-containing nitrite reductase from Alcaligenes faecalis. Mechanistic implications.</title>
        <authorList>
            <person name="Murphy M.E."/>
            <person name="Turley S."/>
            <person name="Adman E.T."/>
        </authorList>
    </citation>
    <scope>X-RAY CRYSTALLOGRAPHY (2.0 ANGSTROMS)</scope>
</reference>